<sequence length="118" mass="13584">MRTTKGAARRQSKKRLFKRAKGFRGGRGNLTRTVKETLLRSGAFAFRDRRVRKREFRKLWIIRINAAVKQHGLRYSEFIHGLNKAGIQLDRKSLSEMAIHDAAGFKQVCDKVKETLAA</sequence>
<feature type="chain" id="PRO_0000177214" description="Large ribosomal subunit protein bL20">
    <location>
        <begin position="1"/>
        <end position="118"/>
    </location>
</feature>
<gene>
    <name evidence="1" type="primary">rplT</name>
    <name type="ordered locus">RB7115</name>
</gene>
<protein>
    <recommendedName>
        <fullName evidence="1">Large ribosomal subunit protein bL20</fullName>
    </recommendedName>
    <alternativeName>
        <fullName evidence="2">50S ribosomal protein L20</fullName>
    </alternativeName>
</protein>
<keyword id="KW-1185">Reference proteome</keyword>
<keyword id="KW-0687">Ribonucleoprotein</keyword>
<keyword id="KW-0689">Ribosomal protein</keyword>
<keyword id="KW-0694">RNA-binding</keyword>
<keyword id="KW-0699">rRNA-binding</keyword>
<evidence type="ECO:0000255" key="1">
    <source>
        <dbReference type="HAMAP-Rule" id="MF_00382"/>
    </source>
</evidence>
<evidence type="ECO:0000305" key="2"/>
<comment type="function">
    <text evidence="1">Binds directly to 23S ribosomal RNA and is necessary for the in vitro assembly process of the 50S ribosomal subunit. It is not involved in the protein synthesizing functions of that subunit.</text>
</comment>
<comment type="similarity">
    <text evidence="1">Belongs to the bacterial ribosomal protein bL20 family.</text>
</comment>
<dbReference type="EMBL" id="BX294145">
    <property type="protein sequence ID" value="CAD75188.1"/>
    <property type="molecule type" value="Genomic_DNA"/>
</dbReference>
<dbReference type="RefSeq" id="NP_867641.1">
    <property type="nucleotide sequence ID" value="NC_005027.1"/>
</dbReference>
<dbReference type="RefSeq" id="WP_007332030.1">
    <property type="nucleotide sequence ID" value="NC_005027.1"/>
</dbReference>
<dbReference type="SMR" id="Q7UP74"/>
<dbReference type="FunCoup" id="Q7UP74">
    <property type="interactions" value="565"/>
</dbReference>
<dbReference type="STRING" id="243090.RB7115"/>
<dbReference type="EnsemblBacteria" id="CAD75188">
    <property type="protein sequence ID" value="CAD75188"/>
    <property type="gene ID" value="RB7115"/>
</dbReference>
<dbReference type="GeneID" id="90607953"/>
<dbReference type="KEGG" id="rba:RB7115"/>
<dbReference type="PATRIC" id="fig|243090.15.peg.3445"/>
<dbReference type="eggNOG" id="COG0292">
    <property type="taxonomic scope" value="Bacteria"/>
</dbReference>
<dbReference type="HOGENOM" id="CLU_123265_0_1_0"/>
<dbReference type="InParanoid" id="Q7UP74"/>
<dbReference type="OrthoDB" id="9808966at2"/>
<dbReference type="Proteomes" id="UP000001025">
    <property type="component" value="Chromosome"/>
</dbReference>
<dbReference type="GO" id="GO:0022625">
    <property type="term" value="C:cytosolic large ribosomal subunit"/>
    <property type="evidence" value="ECO:0000318"/>
    <property type="project" value="GO_Central"/>
</dbReference>
<dbReference type="GO" id="GO:0019843">
    <property type="term" value="F:rRNA binding"/>
    <property type="evidence" value="ECO:0007669"/>
    <property type="project" value="UniProtKB-UniRule"/>
</dbReference>
<dbReference type="GO" id="GO:0003735">
    <property type="term" value="F:structural constituent of ribosome"/>
    <property type="evidence" value="ECO:0000318"/>
    <property type="project" value="GO_Central"/>
</dbReference>
<dbReference type="GO" id="GO:0000027">
    <property type="term" value="P:ribosomal large subunit assembly"/>
    <property type="evidence" value="ECO:0007669"/>
    <property type="project" value="UniProtKB-UniRule"/>
</dbReference>
<dbReference type="GO" id="GO:0006412">
    <property type="term" value="P:translation"/>
    <property type="evidence" value="ECO:0007669"/>
    <property type="project" value="InterPro"/>
</dbReference>
<dbReference type="CDD" id="cd07026">
    <property type="entry name" value="Ribosomal_L20"/>
    <property type="match status" value="1"/>
</dbReference>
<dbReference type="FunFam" id="1.10.1900.20:FF:000001">
    <property type="entry name" value="50S ribosomal protein L20"/>
    <property type="match status" value="1"/>
</dbReference>
<dbReference type="Gene3D" id="6.10.160.10">
    <property type="match status" value="1"/>
</dbReference>
<dbReference type="Gene3D" id="1.10.1900.20">
    <property type="entry name" value="Ribosomal protein L20"/>
    <property type="match status" value="1"/>
</dbReference>
<dbReference type="HAMAP" id="MF_00382">
    <property type="entry name" value="Ribosomal_bL20"/>
    <property type="match status" value="1"/>
</dbReference>
<dbReference type="InterPro" id="IPR005813">
    <property type="entry name" value="Ribosomal_bL20"/>
</dbReference>
<dbReference type="InterPro" id="IPR049946">
    <property type="entry name" value="RIBOSOMAL_L20_CS"/>
</dbReference>
<dbReference type="InterPro" id="IPR035566">
    <property type="entry name" value="Ribosomal_protein_bL20_C"/>
</dbReference>
<dbReference type="NCBIfam" id="TIGR01032">
    <property type="entry name" value="rplT_bact"/>
    <property type="match status" value="1"/>
</dbReference>
<dbReference type="PANTHER" id="PTHR10986">
    <property type="entry name" value="39S RIBOSOMAL PROTEIN L20"/>
    <property type="match status" value="1"/>
</dbReference>
<dbReference type="Pfam" id="PF00453">
    <property type="entry name" value="Ribosomal_L20"/>
    <property type="match status" value="1"/>
</dbReference>
<dbReference type="PRINTS" id="PR00062">
    <property type="entry name" value="RIBOSOMALL20"/>
</dbReference>
<dbReference type="SUPFAM" id="SSF74731">
    <property type="entry name" value="Ribosomal protein L20"/>
    <property type="match status" value="1"/>
</dbReference>
<dbReference type="PROSITE" id="PS00937">
    <property type="entry name" value="RIBOSOMAL_L20"/>
    <property type="match status" value="1"/>
</dbReference>
<accession>Q7UP74</accession>
<proteinExistence type="inferred from homology"/>
<name>RL20_RHOBA</name>
<organism>
    <name type="scientific">Rhodopirellula baltica (strain DSM 10527 / NCIMB 13988 / SH1)</name>
    <dbReference type="NCBI Taxonomy" id="243090"/>
    <lineage>
        <taxon>Bacteria</taxon>
        <taxon>Pseudomonadati</taxon>
        <taxon>Planctomycetota</taxon>
        <taxon>Planctomycetia</taxon>
        <taxon>Pirellulales</taxon>
        <taxon>Pirellulaceae</taxon>
        <taxon>Rhodopirellula</taxon>
    </lineage>
</organism>
<reference key="1">
    <citation type="journal article" date="2003" name="Proc. Natl. Acad. Sci. U.S.A.">
        <title>Complete genome sequence of the marine planctomycete Pirellula sp. strain 1.</title>
        <authorList>
            <person name="Gloeckner F.O."/>
            <person name="Kube M."/>
            <person name="Bauer M."/>
            <person name="Teeling H."/>
            <person name="Lombardot T."/>
            <person name="Ludwig W."/>
            <person name="Gade D."/>
            <person name="Beck A."/>
            <person name="Borzym K."/>
            <person name="Heitmann K."/>
            <person name="Rabus R."/>
            <person name="Schlesner H."/>
            <person name="Amann R."/>
            <person name="Reinhardt R."/>
        </authorList>
    </citation>
    <scope>NUCLEOTIDE SEQUENCE [LARGE SCALE GENOMIC DNA]</scope>
    <source>
        <strain>DSM 10527 / NCIMB 13988 / SH1</strain>
    </source>
</reference>